<feature type="transit peptide" description="Chloroplast" evidence="1">
    <location>
        <begin position="1"/>
        <end position="81"/>
    </location>
</feature>
<feature type="chain" id="PRO_0000029582" description="Oxygen-evolving enhancer protein 2, chloroplastic">
    <location>
        <begin position="82"/>
        <end position="267"/>
    </location>
</feature>
<feature type="strand" evidence="3">
    <location>
        <begin position="97"/>
        <end position="103"/>
    </location>
</feature>
<feature type="strand" evidence="3">
    <location>
        <begin position="105"/>
        <end position="112"/>
    </location>
</feature>
<feature type="strand" evidence="3">
    <location>
        <begin position="126"/>
        <end position="132"/>
    </location>
</feature>
<feature type="strand" evidence="3">
    <location>
        <begin position="135"/>
        <end position="146"/>
    </location>
</feature>
<feature type="helix" evidence="3">
    <location>
        <begin position="152"/>
        <end position="155"/>
    </location>
</feature>
<feature type="helix" evidence="3">
    <location>
        <begin position="158"/>
        <end position="164"/>
    </location>
</feature>
<feature type="helix" evidence="3">
    <location>
        <begin position="166"/>
        <end position="168"/>
    </location>
</feature>
<feature type="strand" evidence="3">
    <location>
        <begin position="181"/>
        <end position="184"/>
    </location>
</feature>
<feature type="strand" evidence="3">
    <location>
        <begin position="186"/>
        <end position="198"/>
    </location>
</feature>
<feature type="strand" evidence="3">
    <location>
        <begin position="208"/>
        <end position="215"/>
    </location>
</feature>
<feature type="strand" evidence="3">
    <location>
        <begin position="224"/>
        <end position="233"/>
    </location>
</feature>
<feature type="strand" evidence="3">
    <location>
        <begin position="236"/>
        <end position="245"/>
    </location>
</feature>
<feature type="helix" evidence="3">
    <location>
        <begin position="246"/>
        <end position="250"/>
    </location>
</feature>
<feature type="helix" evidence="3">
    <location>
        <begin position="253"/>
        <end position="263"/>
    </location>
</feature>
<keyword id="KW-0002">3D-structure</keyword>
<keyword id="KW-0150">Chloroplast</keyword>
<keyword id="KW-0903">Direct protein sequencing</keyword>
<keyword id="KW-0472">Membrane</keyword>
<keyword id="KW-0602">Photosynthesis</keyword>
<keyword id="KW-0604">Photosystem II</keyword>
<keyword id="KW-0934">Plastid</keyword>
<keyword id="KW-1185">Reference proteome</keyword>
<keyword id="KW-0793">Thylakoid</keyword>
<keyword id="KW-0809">Transit peptide</keyword>
<organism>
    <name type="scientific">Spinacia oleracea</name>
    <name type="common">Spinach</name>
    <dbReference type="NCBI Taxonomy" id="3562"/>
    <lineage>
        <taxon>Eukaryota</taxon>
        <taxon>Viridiplantae</taxon>
        <taxon>Streptophyta</taxon>
        <taxon>Embryophyta</taxon>
        <taxon>Tracheophyta</taxon>
        <taxon>Spermatophyta</taxon>
        <taxon>Magnoliopsida</taxon>
        <taxon>eudicotyledons</taxon>
        <taxon>Gunneridae</taxon>
        <taxon>Pentapetalae</taxon>
        <taxon>Caryophyllales</taxon>
        <taxon>Chenopodiaceae</taxon>
        <taxon>Chenopodioideae</taxon>
        <taxon>Anserineae</taxon>
        <taxon>Spinacia</taxon>
    </lineage>
</organism>
<comment type="function">
    <text>May be involved in the regulation of photosystem II.</text>
</comment>
<comment type="subcellular location">
    <subcellularLocation>
        <location>Plastid</location>
        <location>Chloroplast thylakoid membrane</location>
    </subcellularLocation>
    <text>Associated with the photosystem II complex.</text>
</comment>
<comment type="induction">
    <text>By light.</text>
</comment>
<comment type="similarity">
    <text evidence="2">Belongs to the PsbP family.</text>
</comment>
<reference key="1">
    <citation type="journal article" date="1987" name="FEBS Lett.">
        <title>Nucleotide sequence of cDNA clones encoding the complete '23 kDa' and '16 kDa' precursor proteins associated with the photosynthetic oxygen-evolving complex from spinach.</title>
        <authorList>
            <person name="Jansen T."/>
            <person name="Steppuhn R.C.J."/>
            <person name="Reinke H."/>
            <person name="Beyreuther K."/>
            <person name="Jansson C."/>
            <person name="Andersson B."/>
            <person name="Herrmann R.G."/>
        </authorList>
    </citation>
    <scope>NUCLEOTIDE SEQUENCE [MRNA]</scope>
</reference>
<reference key="2">
    <citation type="journal article" date="1986" name="FEBS Lett.">
        <title>N-terminal sequence determination and secondary structure analysis of extrinsic membrane proteins in the water-splitting complex of spinach.</title>
        <authorList>
            <person name="Vater J."/>
            <person name="Salnikow J."/>
            <person name="Jansson C."/>
        </authorList>
    </citation>
    <scope>PROTEIN SEQUENCE OF 83-99</scope>
</reference>
<reference key="3">
    <citation type="journal article" date="1987" name="Prog. Photosyn. Res.">
        <title>Partial amino acid sequences of the proteins of pea and spinach photosystem II complex.</title>
        <authorList>
            <person name="Murata N."/>
            <person name="Kajiura H."/>
            <person name="Fujimura Y."/>
            <person name="Miyao M."/>
            <person name="Murata T."/>
            <person name="Watanabe A."/>
            <person name="Shinozaki K."/>
        </authorList>
    </citation>
    <scope>PROTEIN SEQUENCE OF 82-117</scope>
</reference>
<protein>
    <recommendedName>
        <fullName>Oxygen-evolving enhancer protein 2, chloroplastic</fullName>
        <shortName>OEE2</shortName>
    </recommendedName>
    <alternativeName>
        <fullName>23 kDa subunit of oxygen evolving system of photosystem II</fullName>
    </alternativeName>
    <alternativeName>
        <fullName>23 kDa thylakoid membrane protein</fullName>
    </alternativeName>
    <alternativeName>
        <fullName>OEC 23 kDa subunit</fullName>
    </alternativeName>
</protein>
<evidence type="ECO:0000269" key="1">
    <source ref="3"/>
</evidence>
<evidence type="ECO:0000305" key="2"/>
<evidence type="ECO:0007829" key="3">
    <source>
        <dbReference type="PDB" id="4RTI"/>
    </source>
</evidence>
<dbReference type="EMBL" id="X05511">
    <property type="protein sequence ID" value="CAA29055.1"/>
    <property type="molecule type" value="mRNA"/>
</dbReference>
<dbReference type="PIR" id="C24166">
    <property type="entry name" value="C24166"/>
</dbReference>
<dbReference type="PIR" id="S00005">
    <property type="entry name" value="S00005"/>
</dbReference>
<dbReference type="PDB" id="2VU4">
    <property type="method" value="X-ray"/>
    <property type="resolution" value="1.98 A"/>
    <property type="chains" value="A=82-267"/>
</dbReference>
<dbReference type="PDB" id="3JCU">
    <property type="method" value="EM"/>
    <property type="resolution" value="3.20 A"/>
    <property type="chains" value="P/p=1-267"/>
</dbReference>
<dbReference type="PDB" id="4RTI">
    <property type="method" value="X-ray"/>
    <property type="resolution" value="1.80 A"/>
    <property type="chains" value="A=82-267"/>
</dbReference>
<dbReference type="PDB" id="8Z9D">
    <property type="method" value="EM"/>
    <property type="resolution" value="3.22 A"/>
    <property type="chains" value="P/PP/Pp/p=1-267"/>
</dbReference>
<dbReference type="PDBsum" id="2VU4"/>
<dbReference type="PDBsum" id="3JCU"/>
<dbReference type="PDBsum" id="4RTI"/>
<dbReference type="PDBsum" id="8Z9D"/>
<dbReference type="BMRB" id="P12302"/>
<dbReference type="EMDB" id="EMD-39860"/>
<dbReference type="SMR" id="P12302"/>
<dbReference type="DIP" id="DIP-62021N"/>
<dbReference type="IntAct" id="P12302">
    <property type="interactions" value="1"/>
</dbReference>
<dbReference type="OrthoDB" id="507333at2759"/>
<dbReference type="EvolutionaryTrace" id="P12302"/>
<dbReference type="Proteomes" id="UP001155700">
    <property type="component" value="Unplaced"/>
</dbReference>
<dbReference type="GO" id="GO:0009535">
    <property type="term" value="C:chloroplast thylakoid membrane"/>
    <property type="evidence" value="ECO:0007669"/>
    <property type="project" value="UniProtKB-SubCell"/>
</dbReference>
<dbReference type="GO" id="GO:0019898">
    <property type="term" value="C:extrinsic component of membrane"/>
    <property type="evidence" value="ECO:0007669"/>
    <property type="project" value="InterPro"/>
</dbReference>
<dbReference type="GO" id="GO:0009654">
    <property type="term" value="C:photosystem II oxygen evolving complex"/>
    <property type="evidence" value="ECO:0007669"/>
    <property type="project" value="InterPro"/>
</dbReference>
<dbReference type="GO" id="GO:0005509">
    <property type="term" value="F:calcium ion binding"/>
    <property type="evidence" value="ECO:0007669"/>
    <property type="project" value="InterPro"/>
</dbReference>
<dbReference type="GO" id="GO:0030145">
    <property type="term" value="F:manganese ion binding"/>
    <property type="evidence" value="ECO:0000269"/>
    <property type="project" value="DisProt"/>
</dbReference>
<dbReference type="GO" id="GO:0015979">
    <property type="term" value="P:photosynthesis"/>
    <property type="evidence" value="ECO:0007669"/>
    <property type="project" value="UniProtKB-KW"/>
</dbReference>
<dbReference type="DisProt" id="DP01351"/>
<dbReference type="Gene3D" id="3.40.1000.10">
    <property type="entry name" value="Mog1/PsbP, alpha/beta/alpha sandwich"/>
    <property type="match status" value="1"/>
</dbReference>
<dbReference type="InterPro" id="IPR016123">
    <property type="entry name" value="Mog1/PsbP_a/b/a-sand"/>
</dbReference>
<dbReference type="InterPro" id="IPR002683">
    <property type="entry name" value="PsbP_C"/>
</dbReference>
<dbReference type="PANTHER" id="PTHR31407">
    <property type="match status" value="1"/>
</dbReference>
<dbReference type="PANTHER" id="PTHR31407:SF6">
    <property type="entry name" value="OXYGEN-EVOLVING ENHANCER PROTEIN 2-1, CHLOROPLASTIC"/>
    <property type="match status" value="1"/>
</dbReference>
<dbReference type="Pfam" id="PF01789">
    <property type="entry name" value="PsbP"/>
    <property type="match status" value="1"/>
</dbReference>
<dbReference type="SUPFAM" id="SSF55724">
    <property type="entry name" value="Mog1p/PsbP-like"/>
    <property type="match status" value="1"/>
</dbReference>
<gene>
    <name type="primary">PSBP</name>
</gene>
<accession>P12302</accession>
<name>PSBP_SPIOL</name>
<proteinExistence type="evidence at protein level"/>
<sequence>MASTACFLHHHAAISSPAAGRGSAAQRYQAVSIKPNQIVCKAQKQDDNEANVLNSGVSRRLALTVLIGAAAVGSKVSPADAAYGEAANVFGKPKKNTEFMPYNGDGFKLLVPSKWNPSKEKEFPGQVLRYEDNFDATSNLSVLVQPTDKKSITDFGSPEDFLSQVDYLLGKQAYFGKTDSEGGFDSGVVASANVLESSTPVVDGKQYYSITVLTRTADGDEGGKHQVIAATVKDGKLYICKAQAGDKRWFKGAKKFVESATSSFSVA</sequence>